<keyword id="KW-0963">Cytoplasm</keyword>
<keyword id="KW-0489">Methyltransferase</keyword>
<keyword id="KW-0698">rRNA processing</keyword>
<keyword id="KW-0949">S-adenosyl-L-methionine</keyword>
<keyword id="KW-0808">Transferase</keyword>
<protein>
    <recommendedName>
        <fullName evidence="1">Ribosomal RNA small subunit methyltransferase G</fullName>
        <ecNumber evidence="1">2.1.1.170</ecNumber>
    </recommendedName>
    <alternativeName>
        <fullName evidence="1">16S rRNA 7-methylguanosine methyltransferase</fullName>
        <shortName evidence="1">16S rRNA m7G methyltransferase</shortName>
    </alternativeName>
</protein>
<organism>
    <name type="scientific">Burkholderia ambifaria (strain ATCC BAA-244 / DSM 16087 / CCUG 44356 / LMG 19182 / AMMD)</name>
    <name type="common">Burkholderia cepacia (strain AMMD)</name>
    <dbReference type="NCBI Taxonomy" id="339670"/>
    <lineage>
        <taxon>Bacteria</taxon>
        <taxon>Pseudomonadati</taxon>
        <taxon>Pseudomonadota</taxon>
        <taxon>Betaproteobacteria</taxon>
        <taxon>Burkholderiales</taxon>
        <taxon>Burkholderiaceae</taxon>
        <taxon>Burkholderia</taxon>
        <taxon>Burkholderia cepacia complex</taxon>
    </lineage>
</organism>
<dbReference type="EC" id="2.1.1.170" evidence="1"/>
<dbReference type="EMBL" id="CP000440">
    <property type="protein sequence ID" value="ABI85646.1"/>
    <property type="molecule type" value="Genomic_DNA"/>
</dbReference>
<dbReference type="RefSeq" id="WP_011655612.1">
    <property type="nucleotide sequence ID" value="NC_008390.1"/>
</dbReference>
<dbReference type="SMR" id="Q0BJM7"/>
<dbReference type="GeneID" id="93084506"/>
<dbReference type="KEGG" id="bam:Bamb_0085"/>
<dbReference type="PATRIC" id="fig|339670.21.peg.1548"/>
<dbReference type="eggNOG" id="COG0357">
    <property type="taxonomic scope" value="Bacteria"/>
</dbReference>
<dbReference type="Proteomes" id="UP000000662">
    <property type="component" value="Chromosome 1"/>
</dbReference>
<dbReference type="GO" id="GO:0005829">
    <property type="term" value="C:cytosol"/>
    <property type="evidence" value="ECO:0007669"/>
    <property type="project" value="TreeGrafter"/>
</dbReference>
<dbReference type="GO" id="GO:0070043">
    <property type="term" value="F:rRNA (guanine-N7-)-methyltransferase activity"/>
    <property type="evidence" value="ECO:0007669"/>
    <property type="project" value="UniProtKB-UniRule"/>
</dbReference>
<dbReference type="CDD" id="cd02440">
    <property type="entry name" value="AdoMet_MTases"/>
    <property type="match status" value="1"/>
</dbReference>
<dbReference type="Gene3D" id="3.40.50.150">
    <property type="entry name" value="Vaccinia Virus protein VP39"/>
    <property type="match status" value="1"/>
</dbReference>
<dbReference type="HAMAP" id="MF_00074">
    <property type="entry name" value="16SrRNA_methyltr_G"/>
    <property type="match status" value="1"/>
</dbReference>
<dbReference type="InterPro" id="IPR003682">
    <property type="entry name" value="rRNA_ssu_MeTfrase_G"/>
</dbReference>
<dbReference type="InterPro" id="IPR029063">
    <property type="entry name" value="SAM-dependent_MTases_sf"/>
</dbReference>
<dbReference type="NCBIfam" id="TIGR00138">
    <property type="entry name" value="rsmG_gidB"/>
    <property type="match status" value="1"/>
</dbReference>
<dbReference type="PANTHER" id="PTHR31760">
    <property type="entry name" value="S-ADENOSYL-L-METHIONINE-DEPENDENT METHYLTRANSFERASES SUPERFAMILY PROTEIN"/>
    <property type="match status" value="1"/>
</dbReference>
<dbReference type="PANTHER" id="PTHR31760:SF0">
    <property type="entry name" value="S-ADENOSYL-L-METHIONINE-DEPENDENT METHYLTRANSFERASES SUPERFAMILY PROTEIN"/>
    <property type="match status" value="1"/>
</dbReference>
<dbReference type="Pfam" id="PF02527">
    <property type="entry name" value="GidB"/>
    <property type="match status" value="1"/>
</dbReference>
<dbReference type="PIRSF" id="PIRSF003078">
    <property type="entry name" value="GidB"/>
    <property type="match status" value="1"/>
</dbReference>
<dbReference type="SUPFAM" id="SSF53335">
    <property type="entry name" value="S-adenosyl-L-methionine-dependent methyltransferases"/>
    <property type="match status" value="1"/>
</dbReference>
<accession>Q0BJM7</accession>
<sequence>MTARRAPAVNRDVLEQMLVDGTAALDIALTDAQRNQLLDYVALLGKWNAVYNLTAIRDPKQMLIQHILDSLSIVPHLRDRASARVLDVGSGGGLPGIVLAIVRPDWQVTLNDIVQKKSAFQTQMRAELKLANLSVVTGRVELLQPGVDVPEKFDMIVSRAFADLSDFVKLARHLVAPGGSIWAMKGVHPDDEIARLPEGSRVKQTMRLAVPMLDAERHLIEVIVDEAN</sequence>
<reference key="1">
    <citation type="submission" date="2006-08" db="EMBL/GenBank/DDBJ databases">
        <title>Complete sequence of chromosome 1 of Burkholderia cepacia AMMD.</title>
        <authorList>
            <person name="Copeland A."/>
            <person name="Lucas S."/>
            <person name="Lapidus A."/>
            <person name="Barry K."/>
            <person name="Detter J.C."/>
            <person name="Glavina del Rio T."/>
            <person name="Hammon N."/>
            <person name="Israni S."/>
            <person name="Pitluck S."/>
            <person name="Bruce D."/>
            <person name="Chain P."/>
            <person name="Malfatti S."/>
            <person name="Shin M."/>
            <person name="Vergez L."/>
            <person name="Schmutz J."/>
            <person name="Larimer F."/>
            <person name="Land M."/>
            <person name="Hauser L."/>
            <person name="Kyrpides N."/>
            <person name="Kim E."/>
            <person name="Parke J."/>
            <person name="Coenye T."/>
            <person name="Konstantinidis K."/>
            <person name="Ramette A."/>
            <person name="Tiedje J."/>
            <person name="Richardson P."/>
        </authorList>
    </citation>
    <scope>NUCLEOTIDE SEQUENCE [LARGE SCALE GENOMIC DNA]</scope>
    <source>
        <strain>ATCC BAA-244 / DSM 16087 / CCUG 44356 / LMG 19182 / AMMD</strain>
    </source>
</reference>
<feature type="chain" id="PRO_0000335317" description="Ribosomal RNA small subunit methyltransferase G">
    <location>
        <begin position="1"/>
        <end position="228"/>
    </location>
</feature>
<feature type="binding site" evidence="1">
    <location>
        <position position="89"/>
    </location>
    <ligand>
        <name>S-adenosyl-L-methionine</name>
        <dbReference type="ChEBI" id="CHEBI:59789"/>
    </ligand>
</feature>
<feature type="binding site" evidence="1">
    <location>
        <position position="94"/>
    </location>
    <ligand>
        <name>S-adenosyl-L-methionine</name>
        <dbReference type="ChEBI" id="CHEBI:59789"/>
    </ligand>
</feature>
<feature type="binding site" evidence="1">
    <location>
        <begin position="140"/>
        <end position="141"/>
    </location>
    <ligand>
        <name>S-adenosyl-L-methionine</name>
        <dbReference type="ChEBI" id="CHEBI:59789"/>
    </ligand>
</feature>
<feature type="binding site" evidence="1">
    <location>
        <position position="159"/>
    </location>
    <ligand>
        <name>S-adenosyl-L-methionine</name>
        <dbReference type="ChEBI" id="CHEBI:59789"/>
    </ligand>
</feature>
<comment type="function">
    <text evidence="1">Specifically methylates the N7 position of guanine in position 527 of 16S rRNA.</text>
</comment>
<comment type="catalytic activity">
    <reaction evidence="1">
        <text>guanosine(527) in 16S rRNA + S-adenosyl-L-methionine = N(7)-methylguanosine(527) in 16S rRNA + S-adenosyl-L-homocysteine</text>
        <dbReference type="Rhea" id="RHEA:42732"/>
        <dbReference type="Rhea" id="RHEA-COMP:10209"/>
        <dbReference type="Rhea" id="RHEA-COMP:10210"/>
        <dbReference type="ChEBI" id="CHEBI:57856"/>
        <dbReference type="ChEBI" id="CHEBI:59789"/>
        <dbReference type="ChEBI" id="CHEBI:74269"/>
        <dbReference type="ChEBI" id="CHEBI:74480"/>
        <dbReference type="EC" id="2.1.1.170"/>
    </reaction>
</comment>
<comment type="subcellular location">
    <subcellularLocation>
        <location evidence="1">Cytoplasm</location>
    </subcellularLocation>
</comment>
<comment type="similarity">
    <text evidence="1">Belongs to the methyltransferase superfamily. RNA methyltransferase RsmG family.</text>
</comment>
<proteinExistence type="inferred from homology"/>
<name>RSMG_BURCM</name>
<evidence type="ECO:0000255" key="1">
    <source>
        <dbReference type="HAMAP-Rule" id="MF_00074"/>
    </source>
</evidence>
<gene>
    <name evidence="1" type="primary">rsmG</name>
    <name type="ordered locus">Bamb_0085</name>
</gene>